<feature type="chain" id="PRO_1000140720" description="Small ribosomal subunit protein uS4">
    <location>
        <begin position="1"/>
        <end position="208"/>
    </location>
</feature>
<feature type="domain" description="S4 RNA-binding" evidence="1">
    <location>
        <begin position="98"/>
        <end position="158"/>
    </location>
</feature>
<gene>
    <name evidence="1" type="primary">rpsD</name>
    <name type="ordered locus">Dole_0732</name>
</gene>
<sequence length="208" mass="24122">MGRYRESVCRLCRRENLKLFLKGDRCFSDKCAFDRRGYPPGEHGQLRPKFSGYGIQLREKQKVKRMYGLSEGQFRRVFAEADRRKGITGSTLLVLLESRLDNAVYRLGFVNSRTQGRQLIRHNHFLVNGKNVDIPSYVLSPGDVIEVREKSRNMQVIDESLAAVERRGVPQWLSLEKENKRGVVKNLPVREDITIPIQEQLIVELYSK</sequence>
<protein>
    <recommendedName>
        <fullName evidence="1">Small ribosomal subunit protein uS4</fullName>
    </recommendedName>
    <alternativeName>
        <fullName evidence="2">30S ribosomal protein S4</fullName>
    </alternativeName>
</protein>
<dbReference type="EMBL" id="CP000859">
    <property type="protein sequence ID" value="ABW66542.1"/>
    <property type="molecule type" value="Genomic_DNA"/>
</dbReference>
<dbReference type="RefSeq" id="WP_012174160.1">
    <property type="nucleotide sequence ID" value="NC_009943.1"/>
</dbReference>
<dbReference type="SMR" id="A8ZV81"/>
<dbReference type="STRING" id="96561.Dole_0732"/>
<dbReference type="KEGG" id="dol:Dole_0732"/>
<dbReference type="eggNOG" id="COG0522">
    <property type="taxonomic scope" value="Bacteria"/>
</dbReference>
<dbReference type="HOGENOM" id="CLU_092403_0_2_7"/>
<dbReference type="OrthoDB" id="9803672at2"/>
<dbReference type="Proteomes" id="UP000008561">
    <property type="component" value="Chromosome"/>
</dbReference>
<dbReference type="GO" id="GO:0015935">
    <property type="term" value="C:small ribosomal subunit"/>
    <property type="evidence" value="ECO:0007669"/>
    <property type="project" value="InterPro"/>
</dbReference>
<dbReference type="GO" id="GO:0019843">
    <property type="term" value="F:rRNA binding"/>
    <property type="evidence" value="ECO:0007669"/>
    <property type="project" value="UniProtKB-UniRule"/>
</dbReference>
<dbReference type="GO" id="GO:0003735">
    <property type="term" value="F:structural constituent of ribosome"/>
    <property type="evidence" value="ECO:0007669"/>
    <property type="project" value="InterPro"/>
</dbReference>
<dbReference type="GO" id="GO:0042274">
    <property type="term" value="P:ribosomal small subunit biogenesis"/>
    <property type="evidence" value="ECO:0007669"/>
    <property type="project" value="TreeGrafter"/>
</dbReference>
<dbReference type="GO" id="GO:0006412">
    <property type="term" value="P:translation"/>
    <property type="evidence" value="ECO:0007669"/>
    <property type="project" value="UniProtKB-UniRule"/>
</dbReference>
<dbReference type="CDD" id="cd00165">
    <property type="entry name" value="S4"/>
    <property type="match status" value="1"/>
</dbReference>
<dbReference type="FunFam" id="1.10.1050.10:FF:000001">
    <property type="entry name" value="30S ribosomal protein S4"/>
    <property type="match status" value="1"/>
</dbReference>
<dbReference type="FunFam" id="3.10.290.10:FF:000001">
    <property type="entry name" value="30S ribosomal protein S4"/>
    <property type="match status" value="1"/>
</dbReference>
<dbReference type="Gene3D" id="1.10.1050.10">
    <property type="entry name" value="Ribosomal Protein S4 Delta 41, Chain A, domain 1"/>
    <property type="match status" value="1"/>
</dbReference>
<dbReference type="Gene3D" id="3.10.290.10">
    <property type="entry name" value="RNA-binding S4 domain"/>
    <property type="match status" value="1"/>
</dbReference>
<dbReference type="HAMAP" id="MF_01306_B">
    <property type="entry name" value="Ribosomal_uS4_B"/>
    <property type="match status" value="1"/>
</dbReference>
<dbReference type="InterPro" id="IPR022801">
    <property type="entry name" value="Ribosomal_uS4"/>
</dbReference>
<dbReference type="InterPro" id="IPR005709">
    <property type="entry name" value="Ribosomal_uS4_bac-type"/>
</dbReference>
<dbReference type="InterPro" id="IPR001912">
    <property type="entry name" value="Ribosomal_uS4_N"/>
</dbReference>
<dbReference type="InterPro" id="IPR002942">
    <property type="entry name" value="S4_RNA-bd"/>
</dbReference>
<dbReference type="InterPro" id="IPR036986">
    <property type="entry name" value="S4_RNA-bd_sf"/>
</dbReference>
<dbReference type="NCBIfam" id="NF003717">
    <property type="entry name" value="PRK05327.1"/>
    <property type="match status" value="1"/>
</dbReference>
<dbReference type="NCBIfam" id="TIGR01017">
    <property type="entry name" value="rpsD_bact"/>
    <property type="match status" value="1"/>
</dbReference>
<dbReference type="PANTHER" id="PTHR11831">
    <property type="entry name" value="30S 40S RIBOSOMAL PROTEIN"/>
    <property type="match status" value="1"/>
</dbReference>
<dbReference type="PANTHER" id="PTHR11831:SF4">
    <property type="entry name" value="SMALL RIBOSOMAL SUBUNIT PROTEIN US4M"/>
    <property type="match status" value="1"/>
</dbReference>
<dbReference type="Pfam" id="PF00163">
    <property type="entry name" value="Ribosomal_S4"/>
    <property type="match status" value="1"/>
</dbReference>
<dbReference type="Pfam" id="PF01479">
    <property type="entry name" value="S4"/>
    <property type="match status" value="1"/>
</dbReference>
<dbReference type="SMART" id="SM01390">
    <property type="entry name" value="Ribosomal_S4"/>
    <property type="match status" value="1"/>
</dbReference>
<dbReference type="SMART" id="SM00363">
    <property type="entry name" value="S4"/>
    <property type="match status" value="1"/>
</dbReference>
<dbReference type="SUPFAM" id="SSF55174">
    <property type="entry name" value="Alpha-L RNA-binding motif"/>
    <property type="match status" value="1"/>
</dbReference>
<dbReference type="PROSITE" id="PS50889">
    <property type="entry name" value="S4"/>
    <property type="match status" value="1"/>
</dbReference>
<proteinExistence type="inferred from homology"/>
<evidence type="ECO:0000255" key="1">
    <source>
        <dbReference type="HAMAP-Rule" id="MF_01306"/>
    </source>
</evidence>
<evidence type="ECO:0000305" key="2"/>
<name>RS4_DESOH</name>
<organism>
    <name type="scientific">Desulfosudis oleivorans (strain DSM 6200 / JCM 39069 / Hxd3)</name>
    <name type="common">Desulfococcus oleovorans</name>
    <dbReference type="NCBI Taxonomy" id="96561"/>
    <lineage>
        <taxon>Bacteria</taxon>
        <taxon>Pseudomonadati</taxon>
        <taxon>Thermodesulfobacteriota</taxon>
        <taxon>Desulfobacteria</taxon>
        <taxon>Desulfobacterales</taxon>
        <taxon>Desulfosudaceae</taxon>
        <taxon>Desulfosudis</taxon>
    </lineage>
</organism>
<keyword id="KW-1185">Reference proteome</keyword>
<keyword id="KW-0687">Ribonucleoprotein</keyword>
<keyword id="KW-0689">Ribosomal protein</keyword>
<keyword id="KW-0694">RNA-binding</keyword>
<keyword id="KW-0699">rRNA-binding</keyword>
<accession>A8ZV81</accession>
<reference key="1">
    <citation type="submission" date="2007-10" db="EMBL/GenBank/DDBJ databases">
        <title>Complete sequence of Desulfococcus oleovorans Hxd3.</title>
        <authorList>
            <consortium name="US DOE Joint Genome Institute"/>
            <person name="Copeland A."/>
            <person name="Lucas S."/>
            <person name="Lapidus A."/>
            <person name="Barry K."/>
            <person name="Glavina del Rio T."/>
            <person name="Dalin E."/>
            <person name="Tice H."/>
            <person name="Pitluck S."/>
            <person name="Kiss H."/>
            <person name="Brettin T."/>
            <person name="Bruce D."/>
            <person name="Detter J.C."/>
            <person name="Han C."/>
            <person name="Schmutz J."/>
            <person name="Larimer F."/>
            <person name="Land M."/>
            <person name="Hauser L."/>
            <person name="Kyrpides N."/>
            <person name="Kim E."/>
            <person name="Wawrik B."/>
            <person name="Richardson P."/>
        </authorList>
    </citation>
    <scope>NUCLEOTIDE SEQUENCE [LARGE SCALE GENOMIC DNA]</scope>
    <source>
        <strain>DSM 6200 / JCM 39069 / Hxd3</strain>
    </source>
</reference>
<comment type="function">
    <text evidence="1">One of the primary rRNA binding proteins, it binds directly to 16S rRNA where it nucleates assembly of the body of the 30S subunit.</text>
</comment>
<comment type="function">
    <text evidence="1">With S5 and S12 plays an important role in translational accuracy.</text>
</comment>
<comment type="subunit">
    <text evidence="1">Part of the 30S ribosomal subunit. Contacts protein S5. The interaction surface between S4 and S5 is involved in control of translational fidelity.</text>
</comment>
<comment type="similarity">
    <text evidence="1">Belongs to the universal ribosomal protein uS4 family.</text>
</comment>